<protein>
    <recommendedName>
        <fullName evidence="1">UvrABC system protein C</fullName>
        <shortName evidence="1">Protein UvrC</shortName>
    </recommendedName>
    <alternativeName>
        <fullName evidence="1">Excinuclease ABC subunit C</fullName>
    </alternativeName>
</protein>
<evidence type="ECO:0000255" key="1">
    <source>
        <dbReference type="HAMAP-Rule" id="MF_00203"/>
    </source>
</evidence>
<organism>
    <name type="scientific">Rhizobium meliloti (strain 1021)</name>
    <name type="common">Ensifer meliloti</name>
    <name type="synonym">Sinorhizobium meliloti</name>
    <dbReference type="NCBI Taxonomy" id="266834"/>
    <lineage>
        <taxon>Bacteria</taxon>
        <taxon>Pseudomonadati</taxon>
        <taxon>Pseudomonadota</taxon>
        <taxon>Alphaproteobacteria</taxon>
        <taxon>Hyphomicrobiales</taxon>
        <taxon>Rhizobiaceae</taxon>
        <taxon>Sinorhizobium/Ensifer group</taxon>
        <taxon>Sinorhizobium</taxon>
    </lineage>
</organism>
<keyword id="KW-0963">Cytoplasm</keyword>
<keyword id="KW-0227">DNA damage</keyword>
<keyword id="KW-0228">DNA excision</keyword>
<keyword id="KW-0234">DNA repair</keyword>
<keyword id="KW-0267">Excision nuclease</keyword>
<keyword id="KW-1185">Reference proteome</keyword>
<keyword id="KW-0742">SOS response</keyword>
<name>UVRC_RHIME</name>
<proteinExistence type="inferred from homology"/>
<feature type="chain" id="PRO_0000264933" description="UvrABC system protein C">
    <location>
        <begin position="1"/>
        <end position="674"/>
    </location>
</feature>
<feature type="domain" description="GIY-YIG" evidence="1">
    <location>
        <begin position="64"/>
        <end position="142"/>
    </location>
</feature>
<feature type="domain" description="UVR" evidence="1">
    <location>
        <begin position="252"/>
        <end position="287"/>
    </location>
</feature>
<comment type="function">
    <text evidence="1">The UvrABC repair system catalyzes the recognition and processing of DNA lesions. UvrC both incises the 5' and 3' sides of the lesion. The N-terminal half is responsible for the 3' incision and the C-terminal half is responsible for the 5' incision.</text>
</comment>
<comment type="subunit">
    <text evidence="1">Interacts with UvrB in an incision complex.</text>
</comment>
<comment type="subcellular location">
    <subcellularLocation>
        <location evidence="1">Cytoplasm</location>
    </subcellularLocation>
</comment>
<comment type="similarity">
    <text evidence="1">Belongs to the UvrC family.</text>
</comment>
<sequence length="674" mass="74418">MNGQTPTDGGILYDATETDDEDDLVEVTEAERPAPAIGWAESLPEAAGLKGAELIQAFVKRLPNGPGVYRMLNEAGDVLYVGKARSLKKRVSNYAQGRGHSNRIARMVRETAHMEFVTTRTEIEALLLEANLIKRLRPRFNVLLRDDKSFPYIVVTGDTRAPALYKHRGARSRKGDYFGPFASAGAVGRTINSLQRAFLLRTCTDSVFETRTRPCLLYQIKRCSAPCTNEVSDADYAELVSEAKDFLSGKSQAVKATIASAMAEASENLDFERAALYRDRLAALSHVQSHQGINPAGVEEADVFATHHEGGISCIQVFFFRTGQNWGNRAYFPKADPSIPPAEVLSAFLAQFYDDKPCPRQVLLCAPVEEQELLAQALSEKSGYKVSILVPQRGEKKDLVEHALANAREAHGRKLAETASQGRLLEGFAATFQLPYVPRRIEIYDNSHIMGTNAVGGMVVAGPEGFVKGQYRKFNIKSTDITPGDDFGMMREVMTRRFSRLLKEEGKPDRSAEPGEDAGFPAWPDVILIDGGQGQMTAVRTILKELGIEDCVTAIGVAKGVDRDAGRERFFAEGRESFTLPPRDPVLYFIQRLRDEAHRFAIGSHRARRKKEMVKNPLDEIAGIGPTRKRALLTHFGTAKAVSRAGINDLMSVNGISETVARIVYEHFHEDAAK</sequence>
<reference key="1">
    <citation type="journal article" date="2001" name="Proc. Natl. Acad. Sci. U.S.A.">
        <title>Analysis of the chromosome sequence of the legume symbiont Sinorhizobium meliloti strain 1021.</title>
        <authorList>
            <person name="Capela D."/>
            <person name="Barloy-Hubler F."/>
            <person name="Gouzy J."/>
            <person name="Bothe G."/>
            <person name="Ampe F."/>
            <person name="Batut J."/>
            <person name="Boistard P."/>
            <person name="Becker A."/>
            <person name="Boutry M."/>
            <person name="Cadieu E."/>
            <person name="Dreano S."/>
            <person name="Gloux S."/>
            <person name="Godrie T."/>
            <person name="Goffeau A."/>
            <person name="Kahn D."/>
            <person name="Kiss E."/>
            <person name="Lelaure V."/>
            <person name="Masuy D."/>
            <person name="Pohl T."/>
            <person name="Portetelle D."/>
            <person name="Puehler A."/>
            <person name="Purnelle B."/>
            <person name="Ramsperger U."/>
            <person name="Renard C."/>
            <person name="Thebault P."/>
            <person name="Vandenbol M."/>
            <person name="Weidner S."/>
            <person name="Galibert F."/>
        </authorList>
    </citation>
    <scope>NUCLEOTIDE SEQUENCE [LARGE SCALE GENOMIC DNA]</scope>
    <source>
        <strain>1021</strain>
    </source>
</reference>
<reference key="2">
    <citation type="journal article" date="2001" name="Science">
        <title>The composite genome of the legume symbiont Sinorhizobium meliloti.</title>
        <authorList>
            <person name="Galibert F."/>
            <person name="Finan T.M."/>
            <person name="Long S.R."/>
            <person name="Puehler A."/>
            <person name="Abola P."/>
            <person name="Ampe F."/>
            <person name="Barloy-Hubler F."/>
            <person name="Barnett M.J."/>
            <person name="Becker A."/>
            <person name="Boistard P."/>
            <person name="Bothe G."/>
            <person name="Boutry M."/>
            <person name="Bowser L."/>
            <person name="Buhrmester J."/>
            <person name="Cadieu E."/>
            <person name="Capela D."/>
            <person name="Chain P."/>
            <person name="Cowie A."/>
            <person name="Davis R.W."/>
            <person name="Dreano S."/>
            <person name="Federspiel N.A."/>
            <person name="Fisher R.F."/>
            <person name="Gloux S."/>
            <person name="Godrie T."/>
            <person name="Goffeau A."/>
            <person name="Golding B."/>
            <person name="Gouzy J."/>
            <person name="Gurjal M."/>
            <person name="Hernandez-Lucas I."/>
            <person name="Hong A."/>
            <person name="Huizar L."/>
            <person name="Hyman R.W."/>
            <person name="Jones T."/>
            <person name="Kahn D."/>
            <person name="Kahn M.L."/>
            <person name="Kalman S."/>
            <person name="Keating D.H."/>
            <person name="Kiss E."/>
            <person name="Komp C."/>
            <person name="Lelaure V."/>
            <person name="Masuy D."/>
            <person name="Palm C."/>
            <person name="Peck M.C."/>
            <person name="Pohl T.M."/>
            <person name="Portetelle D."/>
            <person name="Purnelle B."/>
            <person name="Ramsperger U."/>
            <person name="Surzycki R."/>
            <person name="Thebault P."/>
            <person name="Vandenbol M."/>
            <person name="Vorhoelter F.J."/>
            <person name="Weidner S."/>
            <person name="Wells D.H."/>
            <person name="Wong K."/>
            <person name="Yeh K.-C."/>
            <person name="Batut J."/>
        </authorList>
    </citation>
    <scope>NUCLEOTIDE SEQUENCE [LARGE SCALE GENOMIC DNA]</scope>
    <source>
        <strain>1021</strain>
    </source>
</reference>
<gene>
    <name evidence="1" type="primary">uvrC</name>
    <name type="ordered locus">R01171</name>
    <name type="ORF">SMc00602</name>
</gene>
<dbReference type="EMBL" id="AL591688">
    <property type="protein sequence ID" value="CAC45750.1"/>
    <property type="molecule type" value="Genomic_DNA"/>
</dbReference>
<dbReference type="RefSeq" id="NP_385277.1">
    <property type="nucleotide sequence ID" value="NC_003047.1"/>
</dbReference>
<dbReference type="RefSeq" id="WP_010969086.1">
    <property type="nucleotide sequence ID" value="NC_003047.1"/>
</dbReference>
<dbReference type="SMR" id="Q92QX2"/>
<dbReference type="EnsemblBacteria" id="CAC45750">
    <property type="protein sequence ID" value="CAC45750"/>
    <property type="gene ID" value="SMc00602"/>
</dbReference>
<dbReference type="KEGG" id="sme:SMc00602"/>
<dbReference type="PATRIC" id="fig|266834.11.peg.2581"/>
<dbReference type="eggNOG" id="COG0322">
    <property type="taxonomic scope" value="Bacteria"/>
</dbReference>
<dbReference type="HOGENOM" id="CLU_014841_3_0_5"/>
<dbReference type="OrthoDB" id="9804933at2"/>
<dbReference type="Proteomes" id="UP000001976">
    <property type="component" value="Chromosome"/>
</dbReference>
<dbReference type="GO" id="GO:0005737">
    <property type="term" value="C:cytoplasm"/>
    <property type="evidence" value="ECO:0007669"/>
    <property type="project" value="UniProtKB-SubCell"/>
</dbReference>
<dbReference type="GO" id="GO:0009380">
    <property type="term" value="C:excinuclease repair complex"/>
    <property type="evidence" value="ECO:0007669"/>
    <property type="project" value="InterPro"/>
</dbReference>
<dbReference type="GO" id="GO:0003677">
    <property type="term" value="F:DNA binding"/>
    <property type="evidence" value="ECO:0007669"/>
    <property type="project" value="UniProtKB-UniRule"/>
</dbReference>
<dbReference type="GO" id="GO:0009381">
    <property type="term" value="F:excinuclease ABC activity"/>
    <property type="evidence" value="ECO:0007669"/>
    <property type="project" value="UniProtKB-UniRule"/>
</dbReference>
<dbReference type="GO" id="GO:0006289">
    <property type="term" value="P:nucleotide-excision repair"/>
    <property type="evidence" value="ECO:0007669"/>
    <property type="project" value="UniProtKB-UniRule"/>
</dbReference>
<dbReference type="GO" id="GO:0009432">
    <property type="term" value="P:SOS response"/>
    <property type="evidence" value="ECO:0007669"/>
    <property type="project" value="UniProtKB-UniRule"/>
</dbReference>
<dbReference type="CDD" id="cd10434">
    <property type="entry name" value="GIY-YIG_UvrC_Cho"/>
    <property type="match status" value="1"/>
</dbReference>
<dbReference type="FunFam" id="3.30.420.340:FF:000001">
    <property type="entry name" value="UvrABC system protein C"/>
    <property type="match status" value="1"/>
</dbReference>
<dbReference type="FunFam" id="3.40.1440.10:FF:000001">
    <property type="entry name" value="UvrABC system protein C"/>
    <property type="match status" value="1"/>
</dbReference>
<dbReference type="Gene3D" id="1.10.150.20">
    <property type="entry name" value="5' to 3' exonuclease, C-terminal subdomain"/>
    <property type="match status" value="1"/>
</dbReference>
<dbReference type="Gene3D" id="3.40.1440.10">
    <property type="entry name" value="GIY-YIG endonuclease"/>
    <property type="match status" value="1"/>
</dbReference>
<dbReference type="Gene3D" id="4.10.860.10">
    <property type="entry name" value="UVR domain"/>
    <property type="match status" value="1"/>
</dbReference>
<dbReference type="Gene3D" id="3.30.420.340">
    <property type="entry name" value="UvrC, RNAse H endonuclease domain"/>
    <property type="match status" value="1"/>
</dbReference>
<dbReference type="HAMAP" id="MF_00203">
    <property type="entry name" value="UvrC"/>
    <property type="match status" value="1"/>
</dbReference>
<dbReference type="InterPro" id="IPR000305">
    <property type="entry name" value="GIY-YIG_endonuc"/>
</dbReference>
<dbReference type="InterPro" id="IPR035901">
    <property type="entry name" value="GIY-YIG_endonuc_sf"/>
</dbReference>
<dbReference type="InterPro" id="IPR047296">
    <property type="entry name" value="GIY-YIG_UvrC_Cho"/>
</dbReference>
<dbReference type="InterPro" id="IPR010994">
    <property type="entry name" value="RuvA_2-like"/>
</dbReference>
<dbReference type="InterPro" id="IPR001943">
    <property type="entry name" value="UVR_dom"/>
</dbReference>
<dbReference type="InterPro" id="IPR036876">
    <property type="entry name" value="UVR_dom_sf"/>
</dbReference>
<dbReference type="InterPro" id="IPR050066">
    <property type="entry name" value="UvrABC_protein_C"/>
</dbReference>
<dbReference type="InterPro" id="IPR004791">
    <property type="entry name" value="UvrC"/>
</dbReference>
<dbReference type="InterPro" id="IPR001162">
    <property type="entry name" value="UvrC_RNase_H_dom"/>
</dbReference>
<dbReference type="InterPro" id="IPR038476">
    <property type="entry name" value="UvrC_RNase_H_dom_sf"/>
</dbReference>
<dbReference type="NCBIfam" id="NF001824">
    <property type="entry name" value="PRK00558.1-5"/>
    <property type="match status" value="1"/>
</dbReference>
<dbReference type="NCBIfam" id="TIGR00194">
    <property type="entry name" value="uvrC"/>
    <property type="match status" value="1"/>
</dbReference>
<dbReference type="PANTHER" id="PTHR30562:SF1">
    <property type="entry name" value="UVRABC SYSTEM PROTEIN C"/>
    <property type="match status" value="1"/>
</dbReference>
<dbReference type="PANTHER" id="PTHR30562">
    <property type="entry name" value="UVRC/OXIDOREDUCTASE"/>
    <property type="match status" value="1"/>
</dbReference>
<dbReference type="Pfam" id="PF01541">
    <property type="entry name" value="GIY-YIG"/>
    <property type="match status" value="1"/>
</dbReference>
<dbReference type="Pfam" id="PF14520">
    <property type="entry name" value="HHH_5"/>
    <property type="match status" value="1"/>
</dbReference>
<dbReference type="Pfam" id="PF02151">
    <property type="entry name" value="UVR"/>
    <property type="match status" value="1"/>
</dbReference>
<dbReference type="Pfam" id="PF22920">
    <property type="entry name" value="UvrC_RNaseH"/>
    <property type="match status" value="1"/>
</dbReference>
<dbReference type="Pfam" id="PF08459">
    <property type="entry name" value="UvrC_RNaseH_dom"/>
    <property type="match status" value="1"/>
</dbReference>
<dbReference type="SMART" id="SM00465">
    <property type="entry name" value="GIYc"/>
    <property type="match status" value="1"/>
</dbReference>
<dbReference type="SUPFAM" id="SSF46600">
    <property type="entry name" value="C-terminal UvrC-binding domain of UvrB"/>
    <property type="match status" value="1"/>
</dbReference>
<dbReference type="SUPFAM" id="SSF82771">
    <property type="entry name" value="GIY-YIG endonuclease"/>
    <property type="match status" value="1"/>
</dbReference>
<dbReference type="SUPFAM" id="SSF47781">
    <property type="entry name" value="RuvA domain 2-like"/>
    <property type="match status" value="1"/>
</dbReference>
<dbReference type="PROSITE" id="PS50164">
    <property type="entry name" value="GIY_YIG"/>
    <property type="match status" value="1"/>
</dbReference>
<dbReference type="PROSITE" id="PS50151">
    <property type="entry name" value="UVR"/>
    <property type="match status" value="1"/>
</dbReference>
<dbReference type="PROSITE" id="PS50165">
    <property type="entry name" value="UVRC"/>
    <property type="match status" value="1"/>
</dbReference>
<accession>Q92QX2</accession>